<accession>Q9ZKP5</accession>
<proteinExistence type="inferred from homology"/>
<protein>
    <recommendedName>
        <fullName>Uncharacterized RNA pseudouridine synthase jhp_0890</fullName>
        <ecNumber>5.4.99.-</ecNumber>
    </recommendedName>
    <alternativeName>
        <fullName>RNA pseudouridylate synthase</fullName>
    </alternativeName>
    <alternativeName>
        <fullName>RNA-uridine isomerase</fullName>
    </alternativeName>
</protein>
<reference key="1">
    <citation type="journal article" date="1999" name="Nature">
        <title>Genomic sequence comparison of two unrelated isolates of the human gastric pathogen Helicobacter pylori.</title>
        <authorList>
            <person name="Alm R.A."/>
            <person name="Ling L.-S.L."/>
            <person name="Moir D.T."/>
            <person name="King B.L."/>
            <person name="Brown E.D."/>
            <person name="Doig P.C."/>
            <person name="Smith D.R."/>
            <person name="Noonan B."/>
            <person name="Guild B.C."/>
            <person name="deJonge B.L."/>
            <person name="Carmel G."/>
            <person name="Tummino P.J."/>
            <person name="Caruso A."/>
            <person name="Uria-Nickelsen M."/>
            <person name="Mills D.M."/>
            <person name="Ives C."/>
            <person name="Gibson R."/>
            <person name="Merberg D."/>
            <person name="Mills S.D."/>
            <person name="Jiang Q."/>
            <person name="Taylor D.E."/>
            <person name="Vovis G.F."/>
            <person name="Trust T.J."/>
        </authorList>
    </citation>
    <scope>NUCLEOTIDE SEQUENCE [LARGE SCALE GENOMIC DNA]</scope>
    <source>
        <strain>J99 / ATCC 700824</strain>
    </source>
</reference>
<name>Y956_HELPJ</name>
<comment type="catalytic activity">
    <reaction>
        <text>a uridine in RNA = a pseudouridine in RNA</text>
        <dbReference type="Rhea" id="RHEA:48348"/>
        <dbReference type="Rhea" id="RHEA-COMP:12068"/>
        <dbReference type="Rhea" id="RHEA-COMP:12069"/>
        <dbReference type="ChEBI" id="CHEBI:65314"/>
        <dbReference type="ChEBI" id="CHEBI:65315"/>
    </reaction>
</comment>
<comment type="similarity">
    <text evidence="3">Belongs to the pseudouridine synthase RluA family.</text>
</comment>
<keyword id="KW-0413">Isomerase</keyword>
<keyword id="KW-0694">RNA-binding</keyword>
<evidence type="ECO:0000250" key="1"/>
<evidence type="ECO:0000255" key="2">
    <source>
        <dbReference type="PROSITE-ProRule" id="PRU00182"/>
    </source>
</evidence>
<evidence type="ECO:0000305" key="3"/>
<sequence>MEKAYKLLSVQENISHKKAKALIDSGLVSIGGQKLMVARKELPQNTRFSVQKVEKPSVIFEDENILALFKPPFIESYDLVSFFKGWALLHRLDKETSGVILLVKENSEFHLKAKKAFKDRAVKKEYLAIVQGIIEEEREINAPILTIKTTKAFSKISKKGQEAVTIITPLKIINKKTLLKVGIKTGRTHQIRVHLKHINHPIIGDTLYNNEPSSAKRLMLHAHKIALLGYEFEAIAPKEFEI</sequence>
<feature type="chain" id="PRO_0000162738" description="Uncharacterized RNA pseudouridine synthase jhp_0890">
    <location>
        <begin position="1"/>
        <end position="242"/>
    </location>
</feature>
<feature type="domain" description="S4 RNA-binding" evidence="2">
    <location>
        <begin position="2"/>
        <end position="62"/>
    </location>
</feature>
<feature type="active site" evidence="1">
    <location>
        <position position="93"/>
    </location>
</feature>
<gene>
    <name type="ordered locus">jhp_0890</name>
</gene>
<dbReference type="EC" id="5.4.99.-"/>
<dbReference type="EMBL" id="AE001439">
    <property type="protein sequence ID" value="AAD06458.1"/>
    <property type="molecule type" value="Genomic_DNA"/>
</dbReference>
<dbReference type="PIR" id="C71876">
    <property type="entry name" value="C71876"/>
</dbReference>
<dbReference type="RefSeq" id="WP_000409675.1">
    <property type="nucleotide sequence ID" value="NC_000921.1"/>
</dbReference>
<dbReference type="SMR" id="Q9ZKP5"/>
<dbReference type="KEGG" id="hpj:jhp_0890"/>
<dbReference type="PATRIC" id="fig|85963.30.peg.71"/>
<dbReference type="eggNOG" id="COG0564">
    <property type="taxonomic scope" value="Bacteria"/>
</dbReference>
<dbReference type="Proteomes" id="UP000000804">
    <property type="component" value="Chromosome"/>
</dbReference>
<dbReference type="GO" id="GO:0140098">
    <property type="term" value="F:catalytic activity, acting on RNA"/>
    <property type="evidence" value="ECO:0007669"/>
    <property type="project" value="UniProtKB-ARBA"/>
</dbReference>
<dbReference type="GO" id="GO:0009982">
    <property type="term" value="F:pseudouridine synthase activity"/>
    <property type="evidence" value="ECO:0007669"/>
    <property type="project" value="InterPro"/>
</dbReference>
<dbReference type="GO" id="GO:0003723">
    <property type="term" value="F:RNA binding"/>
    <property type="evidence" value="ECO:0007669"/>
    <property type="project" value="UniProtKB-KW"/>
</dbReference>
<dbReference type="GO" id="GO:0000455">
    <property type="term" value="P:enzyme-directed rRNA pseudouridine synthesis"/>
    <property type="evidence" value="ECO:0007669"/>
    <property type="project" value="TreeGrafter"/>
</dbReference>
<dbReference type="CDD" id="cd02869">
    <property type="entry name" value="PseudoU_synth_RluA_like"/>
    <property type="match status" value="1"/>
</dbReference>
<dbReference type="Gene3D" id="3.30.2350.10">
    <property type="entry name" value="Pseudouridine synthase"/>
    <property type="match status" value="1"/>
</dbReference>
<dbReference type="InterPro" id="IPR020103">
    <property type="entry name" value="PsdUridine_synth_cat_dom_sf"/>
</dbReference>
<dbReference type="InterPro" id="IPR006224">
    <property type="entry name" value="PsdUridine_synth_RluA-like_CS"/>
</dbReference>
<dbReference type="InterPro" id="IPR006145">
    <property type="entry name" value="PsdUridine_synth_RsuA/RluA"/>
</dbReference>
<dbReference type="InterPro" id="IPR050188">
    <property type="entry name" value="RluA_PseudoU_synthase"/>
</dbReference>
<dbReference type="PANTHER" id="PTHR21600">
    <property type="entry name" value="MITOCHONDRIAL RNA PSEUDOURIDINE SYNTHASE"/>
    <property type="match status" value="1"/>
</dbReference>
<dbReference type="PANTHER" id="PTHR21600:SF44">
    <property type="entry name" value="RIBOSOMAL LARGE SUBUNIT PSEUDOURIDINE SYNTHASE D"/>
    <property type="match status" value="1"/>
</dbReference>
<dbReference type="Pfam" id="PF00849">
    <property type="entry name" value="PseudoU_synth_2"/>
    <property type="match status" value="1"/>
</dbReference>
<dbReference type="SUPFAM" id="SSF55120">
    <property type="entry name" value="Pseudouridine synthase"/>
    <property type="match status" value="1"/>
</dbReference>
<dbReference type="PROSITE" id="PS01129">
    <property type="entry name" value="PSI_RLU"/>
    <property type="match status" value="1"/>
</dbReference>
<dbReference type="PROSITE" id="PS50889">
    <property type="entry name" value="S4"/>
    <property type="match status" value="1"/>
</dbReference>
<organism>
    <name type="scientific">Helicobacter pylori (strain J99 / ATCC 700824)</name>
    <name type="common">Campylobacter pylori J99</name>
    <dbReference type="NCBI Taxonomy" id="85963"/>
    <lineage>
        <taxon>Bacteria</taxon>
        <taxon>Pseudomonadati</taxon>
        <taxon>Campylobacterota</taxon>
        <taxon>Epsilonproteobacteria</taxon>
        <taxon>Campylobacterales</taxon>
        <taxon>Helicobacteraceae</taxon>
        <taxon>Helicobacter</taxon>
    </lineage>
</organism>